<evidence type="ECO:0000255" key="1"/>
<evidence type="ECO:0000256" key="2">
    <source>
        <dbReference type="SAM" id="MobiDB-lite"/>
    </source>
</evidence>
<evidence type="ECO:0000269" key="3">
    <source>
    </source>
</evidence>
<evidence type="ECO:0000303" key="4">
    <source>
    </source>
</evidence>
<evidence type="ECO:0000305" key="5"/>
<feature type="chain" id="PRO_0000307307" description="Solute carrier family 35 member F1">
    <location>
        <begin position="1"/>
        <end position="408"/>
    </location>
</feature>
<feature type="transmembrane region" description="Helical" evidence="1">
    <location>
        <begin position="60"/>
        <end position="80"/>
    </location>
</feature>
<feature type="transmembrane region" description="Helical" evidence="1">
    <location>
        <begin position="94"/>
        <end position="114"/>
    </location>
</feature>
<feature type="transmembrane region" description="Helical" evidence="1">
    <location>
        <begin position="129"/>
        <end position="147"/>
    </location>
</feature>
<feature type="transmembrane region" description="Helical" evidence="1">
    <location>
        <begin position="158"/>
        <end position="178"/>
    </location>
</feature>
<feature type="transmembrane region" description="Helical" evidence="1">
    <location>
        <begin position="186"/>
        <end position="206"/>
    </location>
</feature>
<feature type="transmembrane region" description="Helical" evidence="1">
    <location>
        <begin position="221"/>
        <end position="241"/>
    </location>
</feature>
<feature type="transmembrane region" description="Helical" evidence="1">
    <location>
        <begin position="247"/>
        <end position="267"/>
    </location>
</feature>
<feature type="transmembrane region" description="Helical" evidence="1">
    <location>
        <begin position="284"/>
        <end position="304"/>
    </location>
</feature>
<feature type="transmembrane region" description="Helical" evidence="1">
    <location>
        <begin position="311"/>
        <end position="331"/>
    </location>
</feature>
<feature type="transmembrane region" description="Helical" evidence="1">
    <location>
        <begin position="335"/>
        <end position="355"/>
    </location>
</feature>
<feature type="region of interest" description="Disordered" evidence="2">
    <location>
        <begin position="1"/>
        <end position="21"/>
    </location>
</feature>
<feature type="splice variant" id="VSP_057263" description="In isoform 2." evidence="4">
    <location>
        <begin position="1"/>
        <end position="59"/>
    </location>
</feature>
<feature type="sequence conflict" description="In Ref. 4; AAH36493." evidence="5" ref="4">
    <original>LQP</original>
    <variation>AER</variation>
    <location>
        <begin position="11"/>
        <end position="13"/>
    </location>
</feature>
<feature type="sequence conflict" description="In Ref. 4; AAH36493." evidence="5" ref="4">
    <original>R</original>
    <variation>G</variation>
    <location>
        <position position="53"/>
    </location>
</feature>
<feature type="sequence conflict" description="In Ref. 4; AAH28615." evidence="5" ref="4">
    <original>T</original>
    <variation>N</variation>
    <location>
        <position position="154"/>
    </location>
</feature>
<feature type="sequence conflict" description="In Ref. 4; AAH28615." evidence="5" ref="4">
    <original>P</original>
    <variation>Q</variation>
    <location>
        <position position="301"/>
    </location>
</feature>
<reference key="1">
    <citation type="journal article" date="2004" name="Nat. Genet.">
        <title>Complete sequencing and characterization of 21,243 full-length human cDNAs.</title>
        <authorList>
            <person name="Ota T."/>
            <person name="Suzuki Y."/>
            <person name="Nishikawa T."/>
            <person name="Otsuki T."/>
            <person name="Sugiyama T."/>
            <person name="Irie R."/>
            <person name="Wakamatsu A."/>
            <person name="Hayashi K."/>
            <person name="Sato H."/>
            <person name="Nagai K."/>
            <person name="Kimura K."/>
            <person name="Makita H."/>
            <person name="Sekine M."/>
            <person name="Obayashi M."/>
            <person name="Nishi T."/>
            <person name="Shibahara T."/>
            <person name="Tanaka T."/>
            <person name="Ishii S."/>
            <person name="Yamamoto J."/>
            <person name="Saito K."/>
            <person name="Kawai Y."/>
            <person name="Isono Y."/>
            <person name="Nakamura Y."/>
            <person name="Nagahari K."/>
            <person name="Murakami K."/>
            <person name="Yasuda T."/>
            <person name="Iwayanagi T."/>
            <person name="Wagatsuma M."/>
            <person name="Shiratori A."/>
            <person name="Sudo H."/>
            <person name="Hosoiri T."/>
            <person name="Kaku Y."/>
            <person name="Kodaira H."/>
            <person name="Kondo H."/>
            <person name="Sugawara M."/>
            <person name="Takahashi M."/>
            <person name="Kanda K."/>
            <person name="Yokoi T."/>
            <person name="Furuya T."/>
            <person name="Kikkawa E."/>
            <person name="Omura Y."/>
            <person name="Abe K."/>
            <person name="Kamihara K."/>
            <person name="Katsuta N."/>
            <person name="Sato K."/>
            <person name="Tanikawa M."/>
            <person name="Yamazaki M."/>
            <person name="Ninomiya K."/>
            <person name="Ishibashi T."/>
            <person name="Yamashita H."/>
            <person name="Murakawa K."/>
            <person name="Fujimori K."/>
            <person name="Tanai H."/>
            <person name="Kimata M."/>
            <person name="Watanabe M."/>
            <person name="Hiraoka S."/>
            <person name="Chiba Y."/>
            <person name="Ishida S."/>
            <person name="Ono Y."/>
            <person name="Takiguchi S."/>
            <person name="Watanabe S."/>
            <person name="Yosida M."/>
            <person name="Hotuta T."/>
            <person name="Kusano J."/>
            <person name="Kanehori K."/>
            <person name="Takahashi-Fujii A."/>
            <person name="Hara H."/>
            <person name="Tanase T.-O."/>
            <person name="Nomura Y."/>
            <person name="Togiya S."/>
            <person name="Komai F."/>
            <person name="Hara R."/>
            <person name="Takeuchi K."/>
            <person name="Arita M."/>
            <person name="Imose N."/>
            <person name="Musashino K."/>
            <person name="Yuuki H."/>
            <person name="Oshima A."/>
            <person name="Sasaki N."/>
            <person name="Aotsuka S."/>
            <person name="Yoshikawa Y."/>
            <person name="Matsunawa H."/>
            <person name="Ichihara T."/>
            <person name="Shiohata N."/>
            <person name="Sano S."/>
            <person name="Moriya S."/>
            <person name="Momiyama H."/>
            <person name="Satoh N."/>
            <person name="Takami S."/>
            <person name="Terashima Y."/>
            <person name="Suzuki O."/>
            <person name="Nakagawa S."/>
            <person name="Senoh A."/>
            <person name="Mizoguchi H."/>
            <person name="Goto Y."/>
            <person name="Shimizu F."/>
            <person name="Wakebe H."/>
            <person name="Hishigaki H."/>
            <person name="Watanabe T."/>
            <person name="Sugiyama A."/>
            <person name="Takemoto M."/>
            <person name="Kawakami B."/>
            <person name="Yamazaki M."/>
            <person name="Watanabe K."/>
            <person name="Kumagai A."/>
            <person name="Itakura S."/>
            <person name="Fukuzumi Y."/>
            <person name="Fujimori Y."/>
            <person name="Komiyama M."/>
            <person name="Tashiro H."/>
            <person name="Tanigami A."/>
            <person name="Fujiwara T."/>
            <person name="Ono T."/>
            <person name="Yamada K."/>
            <person name="Fujii Y."/>
            <person name="Ozaki K."/>
            <person name="Hirao M."/>
            <person name="Ohmori Y."/>
            <person name="Kawabata A."/>
            <person name="Hikiji T."/>
            <person name="Kobatake N."/>
            <person name="Inagaki H."/>
            <person name="Ikema Y."/>
            <person name="Okamoto S."/>
            <person name="Okitani R."/>
            <person name="Kawakami T."/>
            <person name="Noguchi S."/>
            <person name="Itoh T."/>
            <person name="Shigeta K."/>
            <person name="Senba T."/>
            <person name="Matsumura K."/>
            <person name="Nakajima Y."/>
            <person name="Mizuno T."/>
            <person name="Morinaga M."/>
            <person name="Sasaki M."/>
            <person name="Togashi T."/>
            <person name="Oyama M."/>
            <person name="Hata H."/>
            <person name="Watanabe M."/>
            <person name="Komatsu T."/>
            <person name="Mizushima-Sugano J."/>
            <person name="Satoh T."/>
            <person name="Shirai Y."/>
            <person name="Takahashi Y."/>
            <person name="Nakagawa K."/>
            <person name="Okumura K."/>
            <person name="Nagase T."/>
            <person name="Nomura N."/>
            <person name="Kikuchi H."/>
            <person name="Masuho Y."/>
            <person name="Yamashita R."/>
            <person name="Nakai K."/>
            <person name="Yada T."/>
            <person name="Nakamura Y."/>
            <person name="Ohara O."/>
            <person name="Isogai T."/>
            <person name="Sugano S."/>
        </authorList>
    </citation>
    <scope>NUCLEOTIDE SEQUENCE [LARGE SCALE MRNA] (ISOFORM 2)</scope>
    <source>
        <tissue>Hippocampus</tissue>
    </source>
</reference>
<reference key="2">
    <citation type="journal article" date="2003" name="Nature">
        <title>The DNA sequence and analysis of human chromosome 6.</title>
        <authorList>
            <person name="Mungall A.J."/>
            <person name="Palmer S.A."/>
            <person name="Sims S.K."/>
            <person name="Edwards C.A."/>
            <person name="Ashurst J.L."/>
            <person name="Wilming L."/>
            <person name="Jones M.C."/>
            <person name="Horton R."/>
            <person name="Hunt S.E."/>
            <person name="Scott C.E."/>
            <person name="Gilbert J.G.R."/>
            <person name="Clamp M.E."/>
            <person name="Bethel G."/>
            <person name="Milne S."/>
            <person name="Ainscough R."/>
            <person name="Almeida J.P."/>
            <person name="Ambrose K.D."/>
            <person name="Andrews T.D."/>
            <person name="Ashwell R.I.S."/>
            <person name="Babbage A.K."/>
            <person name="Bagguley C.L."/>
            <person name="Bailey J."/>
            <person name="Banerjee R."/>
            <person name="Barker D.J."/>
            <person name="Barlow K.F."/>
            <person name="Bates K."/>
            <person name="Beare D.M."/>
            <person name="Beasley H."/>
            <person name="Beasley O."/>
            <person name="Bird C.P."/>
            <person name="Blakey S.E."/>
            <person name="Bray-Allen S."/>
            <person name="Brook J."/>
            <person name="Brown A.J."/>
            <person name="Brown J.Y."/>
            <person name="Burford D.C."/>
            <person name="Burrill W."/>
            <person name="Burton J."/>
            <person name="Carder C."/>
            <person name="Carter N.P."/>
            <person name="Chapman J.C."/>
            <person name="Clark S.Y."/>
            <person name="Clark G."/>
            <person name="Clee C.M."/>
            <person name="Clegg S."/>
            <person name="Cobley V."/>
            <person name="Collier R.E."/>
            <person name="Collins J.E."/>
            <person name="Colman L.K."/>
            <person name="Corby N.R."/>
            <person name="Coville G.J."/>
            <person name="Culley K.M."/>
            <person name="Dhami P."/>
            <person name="Davies J."/>
            <person name="Dunn M."/>
            <person name="Earthrowl M.E."/>
            <person name="Ellington A.E."/>
            <person name="Evans K.A."/>
            <person name="Faulkner L."/>
            <person name="Francis M.D."/>
            <person name="Frankish A."/>
            <person name="Frankland J."/>
            <person name="French L."/>
            <person name="Garner P."/>
            <person name="Garnett J."/>
            <person name="Ghori M.J."/>
            <person name="Gilby L.M."/>
            <person name="Gillson C.J."/>
            <person name="Glithero R.J."/>
            <person name="Grafham D.V."/>
            <person name="Grant M."/>
            <person name="Gribble S."/>
            <person name="Griffiths C."/>
            <person name="Griffiths M.N.D."/>
            <person name="Hall R."/>
            <person name="Halls K.S."/>
            <person name="Hammond S."/>
            <person name="Harley J.L."/>
            <person name="Hart E.A."/>
            <person name="Heath P.D."/>
            <person name="Heathcott R."/>
            <person name="Holmes S.J."/>
            <person name="Howden P.J."/>
            <person name="Howe K.L."/>
            <person name="Howell G.R."/>
            <person name="Huckle E."/>
            <person name="Humphray S.J."/>
            <person name="Humphries M.D."/>
            <person name="Hunt A.R."/>
            <person name="Johnson C.M."/>
            <person name="Joy A.A."/>
            <person name="Kay M."/>
            <person name="Keenan S.J."/>
            <person name="Kimberley A.M."/>
            <person name="King A."/>
            <person name="Laird G.K."/>
            <person name="Langford C."/>
            <person name="Lawlor S."/>
            <person name="Leongamornlert D.A."/>
            <person name="Leversha M."/>
            <person name="Lloyd C.R."/>
            <person name="Lloyd D.M."/>
            <person name="Loveland J.E."/>
            <person name="Lovell J."/>
            <person name="Martin S."/>
            <person name="Mashreghi-Mohammadi M."/>
            <person name="Maslen G.L."/>
            <person name="Matthews L."/>
            <person name="McCann O.T."/>
            <person name="McLaren S.J."/>
            <person name="McLay K."/>
            <person name="McMurray A."/>
            <person name="Moore M.J.F."/>
            <person name="Mullikin J.C."/>
            <person name="Niblett D."/>
            <person name="Nickerson T."/>
            <person name="Novik K.L."/>
            <person name="Oliver K."/>
            <person name="Overton-Larty E.K."/>
            <person name="Parker A."/>
            <person name="Patel R."/>
            <person name="Pearce A.V."/>
            <person name="Peck A.I."/>
            <person name="Phillimore B.J.C.T."/>
            <person name="Phillips S."/>
            <person name="Plumb R.W."/>
            <person name="Porter K.M."/>
            <person name="Ramsey Y."/>
            <person name="Ranby S.A."/>
            <person name="Rice C.M."/>
            <person name="Ross M.T."/>
            <person name="Searle S.M."/>
            <person name="Sehra H.K."/>
            <person name="Sheridan E."/>
            <person name="Skuce C.D."/>
            <person name="Smith S."/>
            <person name="Smith M."/>
            <person name="Spraggon L."/>
            <person name="Squares S.L."/>
            <person name="Steward C.A."/>
            <person name="Sycamore N."/>
            <person name="Tamlyn-Hall G."/>
            <person name="Tester J."/>
            <person name="Theaker A.J."/>
            <person name="Thomas D.W."/>
            <person name="Thorpe A."/>
            <person name="Tracey A."/>
            <person name="Tromans A."/>
            <person name="Tubby B."/>
            <person name="Wall M."/>
            <person name="Wallis J.M."/>
            <person name="West A.P."/>
            <person name="White S.S."/>
            <person name="Whitehead S.L."/>
            <person name="Whittaker H."/>
            <person name="Wild A."/>
            <person name="Willey D.J."/>
            <person name="Wilmer T.E."/>
            <person name="Wood J.M."/>
            <person name="Wray P.W."/>
            <person name="Wyatt J.C."/>
            <person name="Young L."/>
            <person name="Younger R.M."/>
            <person name="Bentley D.R."/>
            <person name="Coulson A."/>
            <person name="Durbin R.M."/>
            <person name="Hubbard T."/>
            <person name="Sulston J.E."/>
            <person name="Dunham I."/>
            <person name="Rogers J."/>
            <person name="Beck S."/>
        </authorList>
    </citation>
    <scope>NUCLEOTIDE SEQUENCE [LARGE SCALE GENOMIC DNA]</scope>
</reference>
<reference key="3">
    <citation type="submission" date="2005-09" db="EMBL/GenBank/DDBJ databases">
        <authorList>
            <person name="Mural R.J."/>
            <person name="Istrail S."/>
            <person name="Sutton G.G."/>
            <person name="Florea L."/>
            <person name="Halpern A.L."/>
            <person name="Mobarry C.M."/>
            <person name="Lippert R."/>
            <person name="Walenz B."/>
            <person name="Shatkay H."/>
            <person name="Dew I."/>
            <person name="Miller J.R."/>
            <person name="Flanigan M.J."/>
            <person name="Edwards N.J."/>
            <person name="Bolanos R."/>
            <person name="Fasulo D."/>
            <person name="Halldorsson B.V."/>
            <person name="Hannenhalli S."/>
            <person name="Turner R."/>
            <person name="Yooseph S."/>
            <person name="Lu F."/>
            <person name="Nusskern D.R."/>
            <person name="Shue B.C."/>
            <person name="Zheng X.H."/>
            <person name="Zhong F."/>
            <person name="Delcher A.L."/>
            <person name="Huson D.H."/>
            <person name="Kravitz S.A."/>
            <person name="Mouchard L."/>
            <person name="Reinert K."/>
            <person name="Remington K.A."/>
            <person name="Clark A.G."/>
            <person name="Waterman M.S."/>
            <person name="Eichler E.E."/>
            <person name="Adams M.D."/>
            <person name="Hunkapiller M.W."/>
            <person name="Myers E.W."/>
            <person name="Venter J.C."/>
        </authorList>
    </citation>
    <scope>NUCLEOTIDE SEQUENCE [LARGE SCALE GENOMIC DNA]</scope>
</reference>
<reference key="4">
    <citation type="journal article" date="2004" name="Genome Res.">
        <title>The status, quality, and expansion of the NIH full-length cDNA project: the Mammalian Gene Collection (MGC).</title>
        <authorList>
            <consortium name="The MGC Project Team"/>
        </authorList>
    </citation>
    <scope>NUCLEOTIDE SEQUENCE [LARGE SCALE MRNA] (ISOFORM 1)</scope>
    <source>
        <tissue>Brain</tissue>
    </source>
</reference>
<reference key="5">
    <citation type="journal article" date="2007" name="BMC Genomics">
        <title>The full-ORF clone resource of the German cDNA consortium.</title>
        <authorList>
            <person name="Bechtel S."/>
            <person name="Rosenfelder H."/>
            <person name="Duda A."/>
            <person name="Schmidt C.P."/>
            <person name="Ernst U."/>
            <person name="Wellenreuther R."/>
            <person name="Mehrle A."/>
            <person name="Schuster C."/>
            <person name="Bahr A."/>
            <person name="Bloecker H."/>
            <person name="Heubner D."/>
            <person name="Hoerlein A."/>
            <person name="Michel G."/>
            <person name="Wedler H."/>
            <person name="Koehrer K."/>
            <person name="Ottenwaelder B."/>
            <person name="Poustka A."/>
            <person name="Wiemann S."/>
            <person name="Schupp I."/>
        </authorList>
    </citation>
    <scope>NUCLEOTIDE SEQUENCE [LARGE SCALE MRNA] OF 181-408 (ISOFORM 1/2)</scope>
    <source>
        <tissue>Cerebellum</tissue>
    </source>
</reference>
<reference key="6">
    <citation type="journal article" date="2021" name="Elife">
        <title>Localization, proteomics, and metabolite profiling reveal a putative vesicular transporter for UDP-glucose.</title>
        <authorList>
            <person name="Qian C."/>
            <person name="Wu Z."/>
            <person name="Sun R."/>
            <person name="Yu H."/>
            <person name="Zeng J."/>
            <person name="Rao Y."/>
            <person name="Li Y."/>
        </authorList>
    </citation>
    <scope>SUBCELLULAR LOCATION</scope>
</reference>
<accession>Q5T1Q4</accession>
<accession>B4DJ02</accession>
<accession>E1P564</accession>
<accession>Q1RMG1</accession>
<accession>Q4G0U9</accession>
<accession>Q4G167</accession>
<accession>Q6N007</accession>
<dbReference type="EMBL" id="AK295860">
    <property type="protein sequence ID" value="BAG58664.1"/>
    <property type="molecule type" value="mRNA"/>
</dbReference>
<dbReference type="EMBL" id="AL449196">
    <property type="protein sequence ID" value="CAI16177.2"/>
    <property type="molecule type" value="Genomic_DNA"/>
</dbReference>
<dbReference type="EMBL" id="AL133379">
    <property type="protein sequence ID" value="CAI16177.2"/>
    <property type="status" value="JOINED"/>
    <property type="molecule type" value="Genomic_DNA"/>
</dbReference>
<dbReference type="EMBL" id="AL136478">
    <property type="protein sequence ID" value="CAI16177.2"/>
    <property type="status" value="JOINED"/>
    <property type="molecule type" value="Genomic_DNA"/>
</dbReference>
<dbReference type="EMBL" id="Z95326">
    <property type="protein sequence ID" value="CAI16177.2"/>
    <property type="status" value="JOINED"/>
    <property type="molecule type" value="Genomic_DNA"/>
</dbReference>
<dbReference type="EMBL" id="AL450405">
    <property type="status" value="NOT_ANNOTATED_CDS"/>
    <property type="molecule type" value="Genomic_DNA"/>
</dbReference>
<dbReference type="EMBL" id="AL590621">
    <property type="status" value="NOT_ANNOTATED_CDS"/>
    <property type="molecule type" value="Genomic_DNA"/>
</dbReference>
<dbReference type="EMBL" id="KF458261">
    <property type="status" value="NOT_ANNOTATED_CDS"/>
    <property type="molecule type" value="Genomic_DNA"/>
</dbReference>
<dbReference type="EMBL" id="CH471051">
    <property type="protein sequence ID" value="EAW48199.1"/>
    <property type="molecule type" value="Genomic_DNA"/>
</dbReference>
<dbReference type="EMBL" id="CH471051">
    <property type="protein sequence ID" value="EAW48200.1"/>
    <property type="molecule type" value="Genomic_DNA"/>
</dbReference>
<dbReference type="EMBL" id="BC028615">
    <property type="protein sequence ID" value="AAH28615.1"/>
    <property type="molecule type" value="mRNA"/>
</dbReference>
<dbReference type="EMBL" id="BC036493">
    <property type="protein sequence ID" value="AAH36493.1"/>
    <property type="status" value="ALT_FRAME"/>
    <property type="molecule type" value="mRNA"/>
</dbReference>
<dbReference type="EMBL" id="BC114925">
    <property type="protein sequence ID" value="AAI14926.1"/>
    <property type="molecule type" value="mRNA"/>
</dbReference>
<dbReference type="EMBL" id="BX640761">
    <property type="protein sequence ID" value="CAE45867.1"/>
    <property type="molecule type" value="mRNA"/>
</dbReference>
<dbReference type="CCDS" id="CCDS34524.1">
    <molecule id="Q5T1Q4-1"/>
</dbReference>
<dbReference type="RefSeq" id="NP_001025029.2">
    <molecule id="Q5T1Q4-1"/>
    <property type="nucleotide sequence ID" value="NM_001029858.4"/>
</dbReference>
<dbReference type="RefSeq" id="NP_001402860.1">
    <molecule id="Q5T1Q4-1"/>
    <property type="nucleotide sequence ID" value="NM_001415931.1"/>
</dbReference>
<dbReference type="RefSeq" id="XP_005266922.1">
    <property type="nucleotide sequence ID" value="XM_005266865.4"/>
</dbReference>
<dbReference type="SMR" id="Q5T1Q4"/>
<dbReference type="BioGRID" id="128804">
    <property type="interactions" value="21"/>
</dbReference>
<dbReference type="FunCoup" id="Q5T1Q4">
    <property type="interactions" value="453"/>
</dbReference>
<dbReference type="IntAct" id="Q5T1Q4">
    <property type="interactions" value="18"/>
</dbReference>
<dbReference type="STRING" id="9606.ENSP00000353557"/>
<dbReference type="TCDB" id="2.A.7.24.9">
    <property type="family name" value="the drug/metabolite transporter (dmt) superfamily"/>
</dbReference>
<dbReference type="iPTMnet" id="Q5T1Q4"/>
<dbReference type="PhosphoSitePlus" id="Q5T1Q4"/>
<dbReference type="BioMuta" id="SLC35F1"/>
<dbReference type="DMDM" id="160177559"/>
<dbReference type="jPOST" id="Q5T1Q4"/>
<dbReference type="MassIVE" id="Q5T1Q4"/>
<dbReference type="PaxDb" id="9606-ENSP00000353557"/>
<dbReference type="PeptideAtlas" id="Q5T1Q4"/>
<dbReference type="ProteomicsDB" id="64281">
    <molecule id="Q5T1Q4-1"/>
</dbReference>
<dbReference type="Pumba" id="Q5T1Q4"/>
<dbReference type="Antibodypedia" id="19478">
    <property type="antibodies" value="25 antibodies from 13 providers"/>
</dbReference>
<dbReference type="DNASU" id="222553"/>
<dbReference type="Ensembl" id="ENST00000360388.9">
    <molecule id="Q5T1Q4-1"/>
    <property type="protein sequence ID" value="ENSP00000353557.4"/>
    <property type="gene ID" value="ENSG00000196376.11"/>
</dbReference>
<dbReference type="Ensembl" id="ENST00000621341.1">
    <molecule id="Q5T1Q4-2"/>
    <property type="protein sequence ID" value="ENSP00000484738.1"/>
    <property type="gene ID" value="ENSG00000196376.11"/>
</dbReference>
<dbReference type="GeneID" id="222553"/>
<dbReference type="KEGG" id="hsa:222553"/>
<dbReference type="MANE-Select" id="ENST00000360388.9">
    <property type="protein sequence ID" value="ENSP00000353557.4"/>
    <property type="RefSeq nucleotide sequence ID" value="NM_001029858.4"/>
    <property type="RefSeq protein sequence ID" value="NP_001025029.2"/>
</dbReference>
<dbReference type="UCSC" id="uc003pxx.4">
    <molecule id="Q5T1Q4-1"/>
    <property type="organism name" value="human"/>
</dbReference>
<dbReference type="AGR" id="HGNC:21483"/>
<dbReference type="CTD" id="222553"/>
<dbReference type="DisGeNET" id="222553"/>
<dbReference type="GeneCards" id="SLC35F1"/>
<dbReference type="HGNC" id="HGNC:21483">
    <property type="gene designation" value="SLC35F1"/>
</dbReference>
<dbReference type="HPA" id="ENSG00000196376">
    <property type="expression patterns" value="Group enriched (brain, retina)"/>
</dbReference>
<dbReference type="MIM" id="620349">
    <property type="type" value="gene"/>
</dbReference>
<dbReference type="neXtProt" id="NX_Q5T1Q4"/>
<dbReference type="OpenTargets" id="ENSG00000196376"/>
<dbReference type="PharmGKB" id="PA134985447"/>
<dbReference type="VEuPathDB" id="HostDB:ENSG00000196376"/>
<dbReference type="eggNOG" id="KOG2766">
    <property type="taxonomic scope" value="Eukaryota"/>
</dbReference>
<dbReference type="GeneTree" id="ENSGT00390000015655"/>
<dbReference type="HOGENOM" id="CLU_039639_0_0_1"/>
<dbReference type="InParanoid" id="Q5T1Q4"/>
<dbReference type="OMA" id="VRYHWAQ"/>
<dbReference type="OrthoDB" id="429955at2759"/>
<dbReference type="PAN-GO" id="Q5T1Q4">
    <property type="GO annotations" value="0 GO annotations based on evolutionary models"/>
</dbReference>
<dbReference type="PhylomeDB" id="Q5T1Q4"/>
<dbReference type="TreeFam" id="TF313645"/>
<dbReference type="PathwayCommons" id="Q5T1Q4"/>
<dbReference type="SignaLink" id="Q5T1Q4"/>
<dbReference type="BioGRID-ORCS" id="222553">
    <property type="hits" value="7 hits in 1139 CRISPR screens"/>
</dbReference>
<dbReference type="ChiTaRS" id="SLC35F1">
    <property type="organism name" value="human"/>
</dbReference>
<dbReference type="GenomeRNAi" id="222553"/>
<dbReference type="Pharos" id="Q5T1Q4">
    <property type="development level" value="Tdark"/>
</dbReference>
<dbReference type="PRO" id="PR:Q5T1Q4"/>
<dbReference type="Proteomes" id="UP000005640">
    <property type="component" value="Chromosome 6"/>
</dbReference>
<dbReference type="RNAct" id="Q5T1Q4">
    <property type="molecule type" value="protein"/>
</dbReference>
<dbReference type="Bgee" id="ENSG00000196376">
    <property type="expression patterns" value="Expressed in ventricular zone and 139 other cell types or tissues"/>
</dbReference>
<dbReference type="GO" id="GO:0030672">
    <property type="term" value="C:synaptic vesicle membrane"/>
    <property type="evidence" value="ECO:0000314"/>
    <property type="project" value="UniProtKB"/>
</dbReference>
<dbReference type="GO" id="GO:0022857">
    <property type="term" value="F:transmembrane transporter activity"/>
    <property type="evidence" value="ECO:0007669"/>
    <property type="project" value="InterPro"/>
</dbReference>
<dbReference type="InterPro" id="IPR009262">
    <property type="entry name" value="SLC35_F1/F2/F6"/>
</dbReference>
<dbReference type="InterPro" id="IPR052221">
    <property type="entry name" value="SLC35F_Transporter"/>
</dbReference>
<dbReference type="PANTHER" id="PTHR14233">
    <property type="entry name" value="DUF914-RELATED"/>
    <property type="match status" value="1"/>
</dbReference>
<dbReference type="PANTHER" id="PTHR14233:SF10">
    <property type="entry name" value="SOLUTE CARRIER FAMILY 35 MEMBER F1"/>
    <property type="match status" value="1"/>
</dbReference>
<dbReference type="Pfam" id="PF06027">
    <property type="entry name" value="SLC35F"/>
    <property type="match status" value="1"/>
</dbReference>
<dbReference type="SUPFAM" id="SSF103481">
    <property type="entry name" value="Multidrug resistance efflux transporter EmrE"/>
    <property type="match status" value="1"/>
</dbReference>
<comment type="function">
    <text evidence="5">Putative solute transporter.</text>
</comment>
<comment type="interaction">
    <interactant intactId="EBI-13365456">
        <id>Q5T1Q4</id>
    </interactant>
    <interactant intactId="EBI-13059134">
        <id>Q13520</id>
        <label>AQP6</label>
    </interactant>
    <organismsDiffer>false</organismsDiffer>
    <experiments>3</experiments>
</comment>
<comment type="interaction">
    <interactant intactId="EBI-13365456">
        <id>Q5T1Q4</id>
    </interactant>
    <interactant intactId="EBI-356231">
        <id>P06576</id>
        <label>ATP5F1B</label>
    </interactant>
    <organismsDiffer>false</organismsDiffer>
    <experiments>2</experiments>
</comment>
<comment type="interaction">
    <interactant intactId="EBI-13365456">
        <id>Q5T1Q4</id>
    </interactant>
    <interactant intactId="EBI-372265">
        <id>P21964</id>
        <label>COMT</label>
    </interactant>
    <organismsDiffer>false</organismsDiffer>
    <experiments>3</experiments>
</comment>
<comment type="interaction">
    <interactant intactId="EBI-13365456">
        <id>Q5T1Q4</id>
    </interactant>
    <interactant intactId="EBI-750433">
        <id>P36382</id>
        <label>GJA5</label>
    </interactant>
    <organismsDiffer>false</organismsDiffer>
    <experiments>3</experiments>
</comment>
<comment type="interaction">
    <interactant intactId="EBI-13365456">
        <id>Q5T1Q4</id>
    </interactant>
    <interactant intactId="EBI-17458373">
        <id>P48165</id>
        <label>GJA8</label>
    </interactant>
    <organismsDiffer>false</organismsDiffer>
    <experiments>3</experiments>
</comment>
<comment type="interaction">
    <interactant intactId="EBI-13365456">
        <id>Q5T1Q4</id>
    </interactant>
    <interactant intactId="EBI-17295964">
        <id>Q9NQQ7-3</id>
        <label>SLC35C2</label>
    </interactant>
    <organismsDiffer>false</organismsDiffer>
    <experiments>3</experiments>
</comment>
<comment type="interaction">
    <interactant intactId="EBI-13365456">
        <id>Q5T1Q4</id>
    </interactant>
    <interactant intactId="EBI-8638294">
        <id>Q9NUH8</id>
        <label>TMEM14B</label>
    </interactant>
    <organismsDiffer>false</organismsDiffer>
    <experiments>3</experiments>
</comment>
<comment type="interaction">
    <interactant intactId="EBI-13365456">
        <id>Q5T1Q4</id>
    </interactant>
    <interactant intactId="EBI-11988865">
        <id>A5PKU2</id>
        <label>TUSC5</label>
    </interactant>
    <organismsDiffer>false</organismsDiffer>
    <experiments>3</experiments>
</comment>
<comment type="subcellular location">
    <subcellularLocation>
        <location evidence="3">Cytoplasmic vesicle</location>
        <location evidence="3">Secretory vesicle</location>
        <location evidence="3">Synaptic vesicle membrane</location>
        <topology evidence="1">Multi-pass membrane protein</topology>
    </subcellularLocation>
</comment>
<comment type="alternative products">
    <event type="alternative splicing"/>
    <isoform>
        <id>Q5T1Q4-1</id>
        <name>1</name>
        <sequence type="displayed"/>
    </isoform>
    <isoform>
        <id>Q5T1Q4-2</id>
        <name>2</name>
        <sequence type="described" ref="VSP_057263"/>
    </isoform>
</comment>
<comment type="similarity">
    <text evidence="5">Belongs to the SLC35F solute transporter family.</text>
</comment>
<comment type="sequence caution" evidence="5">
    <conflict type="frameshift">
        <sequence resource="EMBL-CDS" id="AAH36493"/>
    </conflict>
</comment>
<protein>
    <recommendedName>
        <fullName>Solute carrier family 35 member F1</fullName>
    </recommendedName>
</protein>
<proteinExistence type="evidence at protein level"/>
<gene>
    <name type="primary">SLC35F1</name>
    <name type="synonym">C6orf169</name>
</gene>
<organism>
    <name type="scientific">Homo sapiens</name>
    <name type="common">Human</name>
    <dbReference type="NCBI Taxonomy" id="9606"/>
    <lineage>
        <taxon>Eukaryota</taxon>
        <taxon>Metazoa</taxon>
        <taxon>Chordata</taxon>
        <taxon>Craniata</taxon>
        <taxon>Vertebrata</taxon>
        <taxon>Euteleostomi</taxon>
        <taxon>Mammalia</taxon>
        <taxon>Eutheria</taxon>
        <taxon>Euarchontoglires</taxon>
        <taxon>Primates</taxon>
        <taxon>Haplorrhini</taxon>
        <taxon>Catarrhini</taxon>
        <taxon>Hominidae</taxon>
        <taxon>Homo</taxon>
    </lineage>
</organism>
<name>S35F1_HUMAN</name>
<keyword id="KW-0025">Alternative splicing</keyword>
<keyword id="KW-0968">Cytoplasmic vesicle</keyword>
<keyword id="KW-0472">Membrane</keyword>
<keyword id="KW-1267">Proteomics identification</keyword>
<keyword id="KW-1185">Reference proteome</keyword>
<keyword id="KW-0770">Synapse</keyword>
<keyword id="KW-0812">Transmembrane</keyword>
<keyword id="KW-1133">Transmembrane helix</keyword>
<keyword id="KW-0813">Transport</keyword>
<sequence>MIPPEQPQQQLQPPSPAPPNHVVTTIENLPAEGSGGGGSLSASSRAGVRQRIRKVLNREMLISVALGQVLSLLICGIGLTSKYLSEDFHANTPVFQSFLNYILLFLVYTTTLAVRQGEENLLAILRRRWWKYMILGLIDLEANYLVVKAYQYTTLTSIQLLDCFVIPVVILLSWFFLLIRYKAVHFIGIVVCILGMGCMVGADVLVGRHQGAGENKLVGDLLVLGGATLYGISNVWEEYIIRTLSRVEFLGMIGLFGAFFSGIQLAIMEHKELLKVPWDWQIGLLYVGFSACMFGLYSFMPVVIKKTSATSVNLSLLTADLYSLFCGLFLFHYKFSGLYLLSFFTILIGLVLYSSTSTYIAQDPRVYKQFRNPSGPVVDLPTTAQVEPSVTYTSLGQETEEEPHVRVA</sequence>